<proteinExistence type="inferred from homology"/>
<evidence type="ECO:0000255" key="1">
    <source>
        <dbReference type="HAMAP-Rule" id="MF_00456"/>
    </source>
</evidence>
<comment type="function">
    <text evidence="1">Catalyzes the transfer of a phosphate group to glutamate to form L-glutamate 5-phosphate.</text>
</comment>
<comment type="catalytic activity">
    <reaction evidence="1">
        <text>L-glutamate + ATP = L-glutamyl 5-phosphate + ADP</text>
        <dbReference type="Rhea" id="RHEA:14877"/>
        <dbReference type="ChEBI" id="CHEBI:29985"/>
        <dbReference type="ChEBI" id="CHEBI:30616"/>
        <dbReference type="ChEBI" id="CHEBI:58274"/>
        <dbReference type="ChEBI" id="CHEBI:456216"/>
        <dbReference type="EC" id="2.7.2.11"/>
    </reaction>
</comment>
<comment type="pathway">
    <text evidence="1">Amino-acid biosynthesis; L-proline biosynthesis; L-glutamate 5-semialdehyde from L-glutamate: step 1/2.</text>
</comment>
<comment type="subcellular location">
    <subcellularLocation>
        <location evidence="1">Cytoplasm</location>
    </subcellularLocation>
</comment>
<comment type="similarity">
    <text evidence="1">Belongs to the glutamate 5-kinase family.</text>
</comment>
<gene>
    <name evidence="1" type="primary">proB</name>
    <name type="ordered locus">CC_0314</name>
</gene>
<reference key="1">
    <citation type="journal article" date="2001" name="Proc. Natl. Acad. Sci. U.S.A.">
        <title>Complete genome sequence of Caulobacter crescentus.</title>
        <authorList>
            <person name="Nierman W.C."/>
            <person name="Feldblyum T.V."/>
            <person name="Laub M.T."/>
            <person name="Paulsen I.T."/>
            <person name="Nelson K.E."/>
            <person name="Eisen J.A."/>
            <person name="Heidelberg J.F."/>
            <person name="Alley M.R.K."/>
            <person name="Ohta N."/>
            <person name="Maddock J.R."/>
            <person name="Potocka I."/>
            <person name="Nelson W.C."/>
            <person name="Newton A."/>
            <person name="Stephens C."/>
            <person name="Phadke N.D."/>
            <person name="Ely B."/>
            <person name="DeBoy R.T."/>
            <person name="Dodson R.J."/>
            <person name="Durkin A.S."/>
            <person name="Gwinn M.L."/>
            <person name="Haft D.H."/>
            <person name="Kolonay J.F."/>
            <person name="Smit J."/>
            <person name="Craven M.B."/>
            <person name="Khouri H.M."/>
            <person name="Shetty J."/>
            <person name="Berry K.J."/>
            <person name="Utterback T.R."/>
            <person name="Tran K."/>
            <person name="Wolf A.M."/>
            <person name="Vamathevan J.J."/>
            <person name="Ermolaeva M.D."/>
            <person name="White O."/>
            <person name="Salzberg S.L."/>
            <person name="Venter J.C."/>
            <person name="Shapiro L."/>
            <person name="Fraser C.M."/>
        </authorList>
    </citation>
    <scope>NUCLEOTIDE SEQUENCE [LARGE SCALE GENOMIC DNA]</scope>
    <source>
        <strain>ATCC 19089 / CIP 103742 / CB 15</strain>
    </source>
</reference>
<organism>
    <name type="scientific">Caulobacter vibrioides (strain ATCC 19089 / CIP 103742 / CB 15)</name>
    <name type="common">Caulobacter crescentus</name>
    <dbReference type="NCBI Taxonomy" id="190650"/>
    <lineage>
        <taxon>Bacteria</taxon>
        <taxon>Pseudomonadati</taxon>
        <taxon>Pseudomonadota</taxon>
        <taxon>Alphaproteobacteria</taxon>
        <taxon>Caulobacterales</taxon>
        <taxon>Caulobacteraceae</taxon>
        <taxon>Caulobacter</taxon>
    </lineage>
</organism>
<protein>
    <recommendedName>
        <fullName evidence="1">Glutamate 5-kinase</fullName>
        <ecNumber evidence="1">2.7.2.11</ecNumber>
    </recommendedName>
    <alternativeName>
        <fullName evidence="1">Gamma-glutamyl kinase</fullName>
        <shortName evidence="1">GK</shortName>
    </alternativeName>
</protein>
<accession>Q9ABB6</accession>
<feature type="chain" id="PRO_0000109657" description="Glutamate 5-kinase">
    <location>
        <begin position="1"/>
        <end position="377"/>
    </location>
</feature>
<feature type="domain" description="PUA" evidence="1">
    <location>
        <begin position="286"/>
        <end position="363"/>
    </location>
</feature>
<feature type="binding site" evidence="1">
    <location>
        <position position="18"/>
    </location>
    <ligand>
        <name>ATP</name>
        <dbReference type="ChEBI" id="CHEBI:30616"/>
    </ligand>
</feature>
<feature type="binding site" evidence="1">
    <location>
        <position position="59"/>
    </location>
    <ligand>
        <name>substrate</name>
    </ligand>
</feature>
<feature type="binding site" evidence="1">
    <location>
        <position position="146"/>
    </location>
    <ligand>
        <name>substrate</name>
    </ligand>
</feature>
<feature type="binding site" evidence="1">
    <location>
        <position position="158"/>
    </location>
    <ligand>
        <name>substrate</name>
    </ligand>
</feature>
<feature type="binding site" evidence="1">
    <location>
        <begin position="178"/>
        <end position="179"/>
    </location>
    <ligand>
        <name>ATP</name>
        <dbReference type="ChEBI" id="CHEBI:30616"/>
    </ligand>
</feature>
<feature type="binding site" evidence="1">
    <location>
        <begin position="222"/>
        <end position="228"/>
    </location>
    <ligand>
        <name>ATP</name>
        <dbReference type="ChEBI" id="CHEBI:30616"/>
    </ligand>
</feature>
<sequence>MTSGSQGAFEAARRIVFKVGSALLVDAETGAANRAWLEAFCADAADLRAAGKQVLVVSSGAVALGRRRLGLTGRKTTLPEKQAAAAAGQSLLMRAWEEAFEPHGIGVAQILLTRDDTEMRRRWLNARATTETLMGLGVVPVVNENDTVVTEEIRYGDNDRLAARVAQMAGADLLVLLSDIDGLYTADPRKNPKAQHIPRVSEITPEIAGMAEGANAAAGVGTGGMATKIAAARIARAAGCATLITLGSRPRPLAAIAAGEKATLIEAGASPAAAYKAWIAGSLAPQGWVTVDAGAASALLAGKSLLPAGVRAVEGPFDKGDAVRVRDENGREVARGLVRYDSADAQRIAGLRSDAIEAELGFTEGPMIHADDLAVAH</sequence>
<dbReference type="EC" id="2.7.2.11" evidence="1"/>
<dbReference type="EMBL" id="AE005673">
    <property type="protein sequence ID" value="AAK22301.1"/>
    <property type="molecule type" value="Genomic_DNA"/>
</dbReference>
<dbReference type="PIR" id="A87288">
    <property type="entry name" value="A87288"/>
</dbReference>
<dbReference type="RefSeq" id="NP_419133.1">
    <property type="nucleotide sequence ID" value="NC_002696.2"/>
</dbReference>
<dbReference type="RefSeq" id="WP_010918203.1">
    <property type="nucleotide sequence ID" value="NC_002696.2"/>
</dbReference>
<dbReference type="SMR" id="Q9ABB6"/>
<dbReference type="STRING" id="190650.CC_0314"/>
<dbReference type="EnsemblBacteria" id="AAK22301">
    <property type="protein sequence ID" value="AAK22301"/>
    <property type="gene ID" value="CC_0314"/>
</dbReference>
<dbReference type="KEGG" id="ccr:CC_0314"/>
<dbReference type="PATRIC" id="fig|190650.5.peg.313"/>
<dbReference type="eggNOG" id="COG0263">
    <property type="taxonomic scope" value="Bacteria"/>
</dbReference>
<dbReference type="HOGENOM" id="CLU_025400_2_0_5"/>
<dbReference type="BioCyc" id="CAULO:CC0314-MONOMER"/>
<dbReference type="UniPathway" id="UPA00098">
    <property type="reaction ID" value="UER00359"/>
</dbReference>
<dbReference type="Proteomes" id="UP000001816">
    <property type="component" value="Chromosome"/>
</dbReference>
<dbReference type="GO" id="GO:0005829">
    <property type="term" value="C:cytosol"/>
    <property type="evidence" value="ECO:0007669"/>
    <property type="project" value="TreeGrafter"/>
</dbReference>
<dbReference type="GO" id="GO:0005524">
    <property type="term" value="F:ATP binding"/>
    <property type="evidence" value="ECO:0007669"/>
    <property type="project" value="UniProtKB-KW"/>
</dbReference>
<dbReference type="GO" id="GO:0004349">
    <property type="term" value="F:glutamate 5-kinase activity"/>
    <property type="evidence" value="ECO:0007669"/>
    <property type="project" value="UniProtKB-UniRule"/>
</dbReference>
<dbReference type="GO" id="GO:0003723">
    <property type="term" value="F:RNA binding"/>
    <property type="evidence" value="ECO:0007669"/>
    <property type="project" value="InterPro"/>
</dbReference>
<dbReference type="GO" id="GO:0055129">
    <property type="term" value="P:L-proline biosynthetic process"/>
    <property type="evidence" value="ECO:0007669"/>
    <property type="project" value="UniProtKB-UniRule"/>
</dbReference>
<dbReference type="CDD" id="cd04242">
    <property type="entry name" value="AAK_G5K_ProB"/>
    <property type="match status" value="1"/>
</dbReference>
<dbReference type="CDD" id="cd21157">
    <property type="entry name" value="PUA_G5K"/>
    <property type="match status" value="1"/>
</dbReference>
<dbReference type="FunFam" id="3.40.1160.10:FF:000018">
    <property type="entry name" value="Glutamate 5-kinase"/>
    <property type="match status" value="1"/>
</dbReference>
<dbReference type="Gene3D" id="3.40.1160.10">
    <property type="entry name" value="Acetylglutamate kinase-like"/>
    <property type="match status" value="2"/>
</dbReference>
<dbReference type="Gene3D" id="2.30.130.10">
    <property type="entry name" value="PUA domain"/>
    <property type="match status" value="1"/>
</dbReference>
<dbReference type="HAMAP" id="MF_00456">
    <property type="entry name" value="ProB"/>
    <property type="match status" value="1"/>
</dbReference>
<dbReference type="InterPro" id="IPR036393">
    <property type="entry name" value="AceGlu_kinase-like_sf"/>
</dbReference>
<dbReference type="InterPro" id="IPR001048">
    <property type="entry name" value="Asp/Glu/Uridylate_kinase"/>
</dbReference>
<dbReference type="InterPro" id="IPR041739">
    <property type="entry name" value="G5K_ProB"/>
</dbReference>
<dbReference type="InterPro" id="IPR001057">
    <property type="entry name" value="Glu/AcGlu_kinase"/>
</dbReference>
<dbReference type="InterPro" id="IPR011529">
    <property type="entry name" value="Glu_5kinase"/>
</dbReference>
<dbReference type="InterPro" id="IPR005715">
    <property type="entry name" value="Glu_5kinase/COase_Synthase"/>
</dbReference>
<dbReference type="InterPro" id="IPR019797">
    <property type="entry name" value="Glutamate_5-kinase_CS"/>
</dbReference>
<dbReference type="InterPro" id="IPR002478">
    <property type="entry name" value="PUA"/>
</dbReference>
<dbReference type="InterPro" id="IPR015947">
    <property type="entry name" value="PUA-like_sf"/>
</dbReference>
<dbReference type="InterPro" id="IPR036974">
    <property type="entry name" value="PUA_sf"/>
</dbReference>
<dbReference type="NCBIfam" id="TIGR01027">
    <property type="entry name" value="proB"/>
    <property type="match status" value="1"/>
</dbReference>
<dbReference type="PANTHER" id="PTHR43654">
    <property type="entry name" value="GLUTAMATE 5-KINASE"/>
    <property type="match status" value="1"/>
</dbReference>
<dbReference type="PANTHER" id="PTHR43654:SF1">
    <property type="entry name" value="ISOPENTENYL PHOSPHATE KINASE"/>
    <property type="match status" value="1"/>
</dbReference>
<dbReference type="Pfam" id="PF00696">
    <property type="entry name" value="AA_kinase"/>
    <property type="match status" value="1"/>
</dbReference>
<dbReference type="Pfam" id="PF01472">
    <property type="entry name" value="PUA"/>
    <property type="match status" value="1"/>
</dbReference>
<dbReference type="PIRSF" id="PIRSF000729">
    <property type="entry name" value="GK"/>
    <property type="match status" value="1"/>
</dbReference>
<dbReference type="PRINTS" id="PR00474">
    <property type="entry name" value="GLU5KINASE"/>
</dbReference>
<dbReference type="SMART" id="SM00359">
    <property type="entry name" value="PUA"/>
    <property type="match status" value="1"/>
</dbReference>
<dbReference type="SUPFAM" id="SSF53633">
    <property type="entry name" value="Carbamate kinase-like"/>
    <property type="match status" value="1"/>
</dbReference>
<dbReference type="SUPFAM" id="SSF88697">
    <property type="entry name" value="PUA domain-like"/>
    <property type="match status" value="1"/>
</dbReference>
<dbReference type="PROSITE" id="PS00902">
    <property type="entry name" value="GLUTAMATE_5_KINASE"/>
    <property type="match status" value="1"/>
</dbReference>
<dbReference type="PROSITE" id="PS50890">
    <property type="entry name" value="PUA"/>
    <property type="match status" value="1"/>
</dbReference>
<name>PROB_CAUVC</name>
<keyword id="KW-0028">Amino-acid biosynthesis</keyword>
<keyword id="KW-0067">ATP-binding</keyword>
<keyword id="KW-0963">Cytoplasm</keyword>
<keyword id="KW-0418">Kinase</keyword>
<keyword id="KW-0547">Nucleotide-binding</keyword>
<keyword id="KW-0641">Proline biosynthesis</keyword>
<keyword id="KW-1185">Reference proteome</keyword>
<keyword id="KW-0808">Transferase</keyword>